<sequence>MIFAKGHGTQNDFVLLPDVDAELVLTAARVAALCDRRKGLGADGVLRVTTAGAAQAVGVLDSLPEGVRVTDWYMDYRNADGSAAQMCGNGVRVFAHYLRASGLEVRDEFVVGSLAGPRPVTCHHVEAAYADVSVDMGKANRLGAGEAVVGGRRFHGLAVDVGNPHLACVDSQLTVDGLAALDVGAPVSFDGAQFPDGVNVEVLTAPVDGAVWMRVHERGVGETRSCGTGTVAAAVAALAAVGSPTGTLTVHVPGGEVVVTVTDATSFLRGPSVLVARGDLADDWWNAMG</sequence>
<accession>C1AFI5</accession>
<feature type="chain" id="PRO_1000124427" description="Diaminopimelate epimerase">
    <location>
        <begin position="1"/>
        <end position="289"/>
    </location>
</feature>
<feature type="active site" description="Proton donor" evidence="1">
    <location>
        <position position="87"/>
    </location>
</feature>
<feature type="active site" description="Proton acceptor" evidence="1">
    <location>
        <position position="226"/>
    </location>
</feature>
<feature type="binding site" evidence="1">
    <location>
        <position position="11"/>
    </location>
    <ligand>
        <name>substrate</name>
    </ligand>
</feature>
<feature type="binding site" evidence="1">
    <location>
        <position position="78"/>
    </location>
    <ligand>
        <name>substrate</name>
    </ligand>
</feature>
<feature type="binding site" evidence="1">
    <location>
        <begin position="88"/>
        <end position="89"/>
    </location>
    <ligand>
        <name>substrate</name>
    </ligand>
</feature>
<feature type="binding site" evidence="1">
    <location>
        <position position="163"/>
    </location>
    <ligand>
        <name>substrate</name>
    </ligand>
</feature>
<feature type="binding site" evidence="1">
    <location>
        <position position="199"/>
    </location>
    <ligand>
        <name>substrate</name>
    </ligand>
</feature>
<feature type="binding site" evidence="1">
    <location>
        <begin position="217"/>
        <end position="218"/>
    </location>
    <ligand>
        <name>substrate</name>
    </ligand>
</feature>
<feature type="binding site" evidence="1">
    <location>
        <begin position="227"/>
        <end position="228"/>
    </location>
    <ligand>
        <name>substrate</name>
    </ligand>
</feature>
<feature type="site" description="Could be important to modulate the pK values of the two catalytic cysteine residues" evidence="1">
    <location>
        <position position="165"/>
    </location>
</feature>
<feature type="site" description="Could be important to modulate the pK values of the two catalytic cysteine residues" evidence="1">
    <location>
        <position position="217"/>
    </location>
</feature>
<gene>
    <name evidence="1" type="primary">dapF</name>
    <name type="ordered locus">JTY_2733</name>
</gene>
<comment type="function">
    <text evidence="1">Catalyzes the stereoinversion of LL-2,6-diaminopimelate (L,L-DAP) to meso-diaminopimelate (meso-DAP), a precursor of L-lysine and an essential component of the bacterial peptidoglycan.</text>
</comment>
<comment type="catalytic activity">
    <reaction evidence="1">
        <text>(2S,6S)-2,6-diaminopimelate = meso-2,6-diaminopimelate</text>
        <dbReference type="Rhea" id="RHEA:15393"/>
        <dbReference type="ChEBI" id="CHEBI:57609"/>
        <dbReference type="ChEBI" id="CHEBI:57791"/>
        <dbReference type="EC" id="5.1.1.7"/>
    </reaction>
</comment>
<comment type="pathway">
    <text evidence="1">Amino-acid biosynthesis; L-lysine biosynthesis via DAP pathway; DL-2,6-diaminopimelate from LL-2,6-diaminopimelate: step 1/1.</text>
</comment>
<comment type="subunit">
    <text evidence="1">Homodimer.</text>
</comment>
<comment type="subcellular location">
    <subcellularLocation>
        <location evidence="1">Cytoplasm</location>
    </subcellularLocation>
</comment>
<comment type="similarity">
    <text evidence="1">Belongs to the diaminopimelate epimerase family.</text>
</comment>
<dbReference type="EC" id="5.1.1.7" evidence="1"/>
<dbReference type="EMBL" id="AP010918">
    <property type="protein sequence ID" value="BAH27014.1"/>
    <property type="molecule type" value="Genomic_DNA"/>
</dbReference>
<dbReference type="RefSeq" id="WP_003413987.1">
    <property type="nucleotide sequence ID" value="NZ_CP014566.1"/>
</dbReference>
<dbReference type="SMR" id="C1AFI5"/>
<dbReference type="GeneID" id="45426713"/>
<dbReference type="KEGG" id="mbt:JTY_2733"/>
<dbReference type="HOGENOM" id="CLU_053306_4_0_11"/>
<dbReference type="UniPathway" id="UPA00034">
    <property type="reaction ID" value="UER00025"/>
</dbReference>
<dbReference type="GO" id="GO:0005829">
    <property type="term" value="C:cytosol"/>
    <property type="evidence" value="ECO:0007669"/>
    <property type="project" value="TreeGrafter"/>
</dbReference>
<dbReference type="GO" id="GO:0008837">
    <property type="term" value="F:diaminopimelate epimerase activity"/>
    <property type="evidence" value="ECO:0007669"/>
    <property type="project" value="UniProtKB-UniRule"/>
</dbReference>
<dbReference type="GO" id="GO:0009089">
    <property type="term" value="P:lysine biosynthetic process via diaminopimelate"/>
    <property type="evidence" value="ECO:0007669"/>
    <property type="project" value="UniProtKB-UniRule"/>
</dbReference>
<dbReference type="Gene3D" id="3.10.310.10">
    <property type="entry name" value="Diaminopimelate Epimerase, Chain A, domain 1"/>
    <property type="match status" value="2"/>
</dbReference>
<dbReference type="HAMAP" id="MF_00197">
    <property type="entry name" value="DAP_epimerase"/>
    <property type="match status" value="1"/>
</dbReference>
<dbReference type="InterPro" id="IPR018510">
    <property type="entry name" value="DAP_epimerase_AS"/>
</dbReference>
<dbReference type="InterPro" id="IPR001653">
    <property type="entry name" value="DAP_epimerase_DapF"/>
</dbReference>
<dbReference type="NCBIfam" id="TIGR00652">
    <property type="entry name" value="DapF"/>
    <property type="match status" value="1"/>
</dbReference>
<dbReference type="PANTHER" id="PTHR31689:SF0">
    <property type="entry name" value="DIAMINOPIMELATE EPIMERASE"/>
    <property type="match status" value="1"/>
</dbReference>
<dbReference type="PANTHER" id="PTHR31689">
    <property type="entry name" value="DIAMINOPIMELATE EPIMERASE, CHLOROPLASTIC"/>
    <property type="match status" value="1"/>
</dbReference>
<dbReference type="Pfam" id="PF01678">
    <property type="entry name" value="DAP_epimerase"/>
    <property type="match status" value="2"/>
</dbReference>
<dbReference type="SUPFAM" id="SSF54506">
    <property type="entry name" value="Diaminopimelate epimerase-like"/>
    <property type="match status" value="2"/>
</dbReference>
<dbReference type="PROSITE" id="PS01326">
    <property type="entry name" value="DAP_EPIMERASE"/>
    <property type="match status" value="1"/>
</dbReference>
<evidence type="ECO:0000255" key="1">
    <source>
        <dbReference type="HAMAP-Rule" id="MF_00197"/>
    </source>
</evidence>
<name>DAPF_MYCBT</name>
<protein>
    <recommendedName>
        <fullName evidence="1">Diaminopimelate epimerase</fullName>
        <shortName evidence="1">DAP epimerase</shortName>
        <ecNumber evidence="1">5.1.1.7</ecNumber>
    </recommendedName>
    <alternativeName>
        <fullName evidence="1">PLP-independent amino acid racemase</fullName>
    </alternativeName>
</protein>
<reference key="1">
    <citation type="journal article" date="2009" name="Vaccine">
        <title>Whole genome sequence analysis of Mycobacterium bovis bacillus Calmette-Guerin (BCG) Tokyo 172: a comparative study of BCG vaccine substrains.</title>
        <authorList>
            <person name="Seki M."/>
            <person name="Honda I."/>
            <person name="Fujita I."/>
            <person name="Yano I."/>
            <person name="Yamamoto S."/>
            <person name="Koyama A."/>
        </authorList>
    </citation>
    <scope>NUCLEOTIDE SEQUENCE [LARGE SCALE GENOMIC DNA]</scope>
    <source>
        <strain>BCG / Tokyo 172 / ATCC 35737 / TMC 1019</strain>
    </source>
</reference>
<organism>
    <name type="scientific">Mycobacterium bovis (strain BCG / Tokyo 172 / ATCC 35737 / TMC 1019)</name>
    <dbReference type="NCBI Taxonomy" id="561275"/>
    <lineage>
        <taxon>Bacteria</taxon>
        <taxon>Bacillati</taxon>
        <taxon>Actinomycetota</taxon>
        <taxon>Actinomycetes</taxon>
        <taxon>Mycobacteriales</taxon>
        <taxon>Mycobacteriaceae</taxon>
        <taxon>Mycobacterium</taxon>
        <taxon>Mycobacterium tuberculosis complex</taxon>
    </lineage>
</organism>
<keyword id="KW-0028">Amino-acid biosynthesis</keyword>
<keyword id="KW-0963">Cytoplasm</keyword>
<keyword id="KW-0413">Isomerase</keyword>
<keyword id="KW-0457">Lysine biosynthesis</keyword>
<proteinExistence type="inferred from homology"/>